<organismHost>
    <name type="scientific">Klebsiella</name>
    <dbReference type="NCBI Taxonomy" id="570"/>
</organismHost>
<protein>
    <recommendedName>
        <fullName evidence="6">Probable tail spike protein</fullName>
    </recommendedName>
    <alternativeName>
        <fullName evidence="6">Depolymerase, capsule KN2-specific</fullName>
    </alternativeName>
    <component>
        <recommendedName>
            <fullName evidence="1">Mature tail spike protein</fullName>
        </recommendedName>
    </component>
    <component>
        <recommendedName>
            <fullName evidence="1">Intramolecular chaperone</fullName>
        </recommendedName>
    </component>
</protein>
<sequence length="1245" mass="133719">MGYFQMTRNVEEIFGGVVVAPHQIPFKYTSTNGGETFLSLPFYPITGFVTINSGVQVPIDNFEIDGNTLNLGRELEPGDVVFCLFDKIMSPQDASNNAVRIYKFLSVGGETEFTPDFTAYGVQSLYIDGKYKTPGEDYNYFKTSGKVVLDTALPTGVWVVAEMSIKQNIPALAGNNGASEIGTNSGKSLAESLGTWIDTTIAIFEMTEAPSVIQTRGFYETNDGGAGVWVATGIISPSLAGTHVPSQAKVYNAGGVEYQLNVKSGFEISAKANGVKAVDDVNAETEDFVCLGEAINGITSRVKTMVNDEDLKTYLKVIIPSEYPLRIGKTSIKAYSRLKLDFQQASIYDRPSPSNRQEVTGVYMNAIERGIEDVRAISARFGGATSYSNMTLSDFHIEGGKFYGDHTTDKGVADCSTGTGLFTYNMENSSIRNTWFQGFACGRQYNRTGPGYYFDNLGNKVVGTLVPEVTSSGTGSYEGVKEWSVTAYGCRYLYLRVLSNWARFDNCKFGTYANWSSSPDGNQCEYFIENRGAGVVFSGGVIEANTAAANPTKGFVRDYARGCTFEGVYYENCLSAGWVIAIPEKSQYNRANGLFLTAIGSQFTLSSQGAPLVKFEEGYFGSYNPATGLYKTGGWETNYQYAGGVNTWAVGQPELDSGAFPHGGYDFKYGTYGIHYSGSVPDADSLRDTQEGNEFLSPYGLSVNSGILLFPTLSPAYQSNIVVWYKDLTGNFDPRNIVVGDFDNNNVSDGTSNALYRTNGFNYYDYGNGYKAAIVPYVNPRALDNRMTTSAGRKLKITVTSDAPIILKSIQAFVGGTPIFPPAIKDYVPRSQRDRIWGTMSAGSTDSGAYYGPLVGGGIFRPGDVVLPFVPFGNAALMNPASYTDNSSGFGASAETAVITGGATWGAGLAGATFTLTVESQDTINNWTTVSVPSAYLPYIFTGMPVYITANSSGGSTGLINTVRRVVNSDGTLSNKYVLYGALGAAGTTLTVSTTSSYTVRSGVSSTLTGVSGSFSASSWLGTASGDLRVGFGASGSGTRQTRYYYNGADVSAVVGSSGANALHLTGTGGITLNGSLLTSTSYSFGSASAYPANIYSQNAVTVVSDVHYKMDIVELNDAEIECAKACAKLYRRYKLKTAVAIKGEDGARYHVGTIAQLVMQAFTDAGLDWTKYGIITYESWEASDAVVETVGAVYDEEGNELVPETIMVVTPAKEAGEIYMVRYDEFNSFVMAGQEARLQALEEK</sequence>
<organism>
    <name type="scientific">Klebsiella phage 0507-KN2-1</name>
    <name type="common">Taipeivirus 0507KN21</name>
    <dbReference type="NCBI Taxonomy" id="2991282"/>
    <lineage>
        <taxon>Viruses</taxon>
        <taxon>Duplodnaviria</taxon>
        <taxon>Heunggongvirae</taxon>
        <taxon>Uroviricota</taxon>
        <taxon>Caudoviricetes</taxon>
        <taxon>Ackermannviridae</taxon>
        <taxon>Taipeivirus</taxon>
        <taxon>Taipeivirus 0507KN21</taxon>
    </lineage>
</organism>
<name>DEPOL_BPK05</name>
<keyword id="KW-1238">Degradation of host capsule during virus entry</keyword>
<keyword id="KW-1235">Degradation of host cell envelope components during virus entry</keyword>
<keyword id="KW-0945">Host-virus interaction</keyword>
<keyword id="KW-0378">Hydrolase</keyword>
<keyword id="KW-0645">Protease</keyword>
<keyword id="KW-1233">Viral attachment to host adhesion receptor</keyword>
<keyword id="KW-1161">Viral attachment to host cell</keyword>
<keyword id="KW-1230">Viral tail fiber protein</keyword>
<keyword id="KW-1227">Viral tail protein</keyword>
<keyword id="KW-0946">Virion</keyword>
<keyword id="KW-1160">Virus entry into host cell</keyword>
<feature type="chain" id="PRO_0000458700" description="Probable tail spike protein">
    <location>
        <begin position="1"/>
        <end position="1245"/>
    </location>
</feature>
<feature type="chain" id="PRO_0000458701" description="Mature tail spike protein">
    <location>
        <begin position="1"/>
        <end position="1105"/>
    </location>
</feature>
<feature type="chain" id="PRO_0000458702" description="Intramolecular chaperone" evidence="3">
    <location>
        <begin position="1106"/>
        <end position="1245"/>
    </location>
</feature>
<feature type="domain" description="Peptidase S74" evidence="4">
    <location>
        <begin position="1105"/>
        <end position="1245"/>
    </location>
</feature>
<feature type="site" description="Cleavage; by autolysis" evidence="1">
    <location>
        <begin position="1105"/>
        <end position="1106"/>
    </location>
</feature>
<comment type="function">
    <molecule>Mature tail spike protein</molecule>
    <text evidence="5 7">Functions as a receptor binding protein (RBP) and probably mediates the attachment to the host capsular exopolysaccharides (Probable). Displays a depolymerase activity that specifically degrades the KN2-type polysaccharides of Klebsiella pneumoniae capsule (PubMed:23936379).</text>
</comment>
<comment type="function">
    <molecule>Intramolecular chaperone</molecule>
    <text evidence="3">The C-terminal chaperone protein mediates homotrimerization and proper folding of the catalytic trimer.</text>
</comment>
<comment type="subcellular location">
    <molecule>Mature tail spike protein</molecule>
    <subcellularLocation>
        <location evidence="6">Virion</location>
    </subcellularLocation>
    <text evidence="6">Tail appendage.</text>
</comment>
<comment type="PTM">
    <molecule>Probable tail spike protein</molecule>
    <text evidence="2 3">Proteolytic cleavage and release of the chaperone in the host cytosol stabilizes the folded protein (By similarity). The cleavage gives rise to the mature tail spike protein but is not essential for catalytic activity (By similarity).</text>
</comment>
<gene>
    <name type="ORF">ORF96</name>
</gene>
<evidence type="ECO:0000250" key="1">
    <source>
        <dbReference type="UniProtKB" id="O09496"/>
    </source>
</evidence>
<evidence type="ECO:0000250" key="2">
    <source>
        <dbReference type="UniProtKB" id="P49714"/>
    </source>
</evidence>
<evidence type="ECO:0000250" key="3">
    <source>
        <dbReference type="UniProtKB" id="Q04830"/>
    </source>
</evidence>
<evidence type="ECO:0000255" key="4">
    <source>
        <dbReference type="PROSITE-ProRule" id="PRU01025"/>
    </source>
</evidence>
<evidence type="ECO:0000269" key="5">
    <source>
    </source>
</evidence>
<evidence type="ECO:0000305" key="6"/>
<evidence type="ECO:0000305" key="7">
    <source>
    </source>
</evidence>
<reference key="1">
    <citation type="journal article" date="2013" name="PLoS ONE">
        <title>Isolation of a Bacteriophage Specific for a New Capsular Type of Klebsiella pneumoniae and Characterization of Its Polysaccharide Depolymerase.</title>
        <authorList>
            <person name="Hsu C.R."/>
            <person name="Lin T.L."/>
            <person name="Pan Y.J."/>
            <person name="Hsieh P.F."/>
            <person name="Wang J.T."/>
        </authorList>
    </citation>
    <scope>NUCLEOTIDE SEQUENCE [LARGE SCALE GENOMIC DNA]</scope>
    <scope>FUNCTION (MATURE TAIL SPIKE PROTEIN)</scope>
</reference>
<reference key="2">
    <citation type="journal article" date="2019" name="Front. Microbiol.">
        <title>Modeling the Architecture of Depolymerase-Containing Receptor Binding Proteins in Klebsiella Phages.</title>
        <authorList>
            <person name="Latka A."/>
            <person name="Leiman P.G."/>
            <person name="Drulis-Kawa Z."/>
            <person name="Briers Y."/>
        </authorList>
    </citation>
    <scope>REVIEW</scope>
</reference>
<dbReference type="EMBL" id="AB797215">
    <property type="protein sequence ID" value="BAN78446.1"/>
    <property type="molecule type" value="Genomic_DNA"/>
</dbReference>
<dbReference type="SMR" id="S6C8R9"/>
<dbReference type="KEGG" id="vg:16836165"/>
<dbReference type="Proteomes" id="UP000015925">
    <property type="component" value="Segment"/>
</dbReference>
<dbReference type="GO" id="GO:0098024">
    <property type="term" value="C:virus tail, fiber"/>
    <property type="evidence" value="ECO:0007669"/>
    <property type="project" value="UniProtKB-KW"/>
</dbReference>
<dbReference type="GO" id="GO:0008233">
    <property type="term" value="F:peptidase activity"/>
    <property type="evidence" value="ECO:0007669"/>
    <property type="project" value="UniProtKB-KW"/>
</dbReference>
<dbReference type="GO" id="GO:0098671">
    <property type="term" value="P:adhesion receptor-mediated virion attachment to host cell"/>
    <property type="evidence" value="ECO:0007669"/>
    <property type="project" value="UniProtKB-KW"/>
</dbReference>
<dbReference type="GO" id="GO:0006508">
    <property type="term" value="P:proteolysis"/>
    <property type="evidence" value="ECO:0007669"/>
    <property type="project" value="UniProtKB-KW"/>
</dbReference>
<dbReference type="GO" id="GO:0098994">
    <property type="term" value="P:symbiont entry into host cell via disruption of host cell envelope"/>
    <property type="evidence" value="ECO:0007669"/>
    <property type="project" value="UniProtKB-KW"/>
</dbReference>
<dbReference type="GO" id="GO:0098996">
    <property type="term" value="P:symbiont entry into host cell via disruption of host cell glycocalyx"/>
    <property type="evidence" value="ECO:0007669"/>
    <property type="project" value="UniProtKB-KW"/>
</dbReference>
<dbReference type="CDD" id="cd10144">
    <property type="entry name" value="Peptidase_S74_CIMCD"/>
    <property type="match status" value="1"/>
</dbReference>
<dbReference type="Gene3D" id="1.10.10.10">
    <property type="entry name" value="Winged helix-like DNA-binding domain superfamily/Winged helix DNA-binding domain"/>
    <property type="match status" value="1"/>
</dbReference>
<dbReference type="InterPro" id="IPR030392">
    <property type="entry name" value="S74_ICA"/>
</dbReference>
<dbReference type="InterPro" id="IPR036388">
    <property type="entry name" value="WH-like_DNA-bd_sf"/>
</dbReference>
<dbReference type="Pfam" id="PF13884">
    <property type="entry name" value="Peptidase_S74"/>
    <property type="match status" value="1"/>
</dbReference>
<dbReference type="PROSITE" id="PS51688">
    <property type="entry name" value="ICA"/>
    <property type="match status" value="1"/>
</dbReference>
<proteinExistence type="inferred from homology"/>
<accession>S6C8R9</accession>